<keyword id="KW-0238">DNA-binding</keyword>
<keyword id="KW-0255">Endonuclease</keyword>
<keyword id="KW-0378">Hydrolase</keyword>
<keyword id="KW-0540">Nuclease</keyword>
<keyword id="KW-1185">Reference proteome</keyword>
<keyword id="KW-0680">Restriction system</keyword>
<accession>Q58895</accession>
<comment type="function">
    <text evidence="1">A P subtype restriction enzyme that recognizes the double-stranded sequence 5'-GTAC-3'; the cleavage site is unknown.</text>
</comment>
<comment type="catalytic activity">
    <reaction>
        <text>Endonucleolytic cleavage of DNA to give specific double-stranded fragments with terminal 5'-phosphates.</text>
        <dbReference type="EC" id="3.1.21.4"/>
    </reaction>
</comment>
<sequence length="230" mass="26764">MDDKSYYEEIESILRQILQPIEKISFSTFIRVVSGYKIIPIDLSKKEDKELINDLAKACNEVIEEIKKTGGVKTKEGKTPKRVNEVGNHIEHYVKDVLNKYGYAITPKTKKGKQKSTGYPDIEFWYKGKKERDGRVVYIEIKTFNEKNINSSHRTFYASPSKDEEGVKIRYDAPHLCLSFKIEKLGRDYYATGFKIIDLSKLKGGIKREFNASNRELYKKDLIIYEKDLK</sequence>
<protein>
    <recommendedName>
        <fullName evidence="1">Type II restriction enzyme MjaV</fullName>
        <shortName>R.MjaV</shortName>
        <ecNumber>3.1.21.4</ecNumber>
    </recommendedName>
    <alternativeName>
        <fullName>Endonuclease MjaV</fullName>
    </alternativeName>
    <alternativeName>
        <fullName>Type-2 restriction enzyme MjaV</fullName>
    </alternativeName>
</protein>
<evidence type="ECO:0000303" key="1">
    <source>
    </source>
</evidence>
<proteinExistence type="evidence at protein level"/>
<gene>
    <name type="primary">mjaVR</name>
    <name type="ordered locus">MJ1500</name>
</gene>
<name>T2M5_METJA</name>
<reference key="1">
    <citation type="journal article" date="1996" name="Science">
        <title>Complete genome sequence of the methanogenic archaeon, Methanococcus jannaschii.</title>
        <authorList>
            <person name="Bult C.J."/>
            <person name="White O."/>
            <person name="Olsen G.J."/>
            <person name="Zhou L."/>
            <person name="Fleischmann R.D."/>
            <person name="Sutton G.G."/>
            <person name="Blake J.A."/>
            <person name="FitzGerald L.M."/>
            <person name="Clayton R.A."/>
            <person name="Gocayne J.D."/>
            <person name="Kerlavage A.R."/>
            <person name="Dougherty B.A."/>
            <person name="Tomb J.-F."/>
            <person name="Adams M.D."/>
            <person name="Reich C.I."/>
            <person name="Overbeek R."/>
            <person name="Kirkness E.F."/>
            <person name="Weinstock K.G."/>
            <person name="Merrick J.M."/>
            <person name="Glodek A."/>
            <person name="Scott J.L."/>
            <person name="Geoghagen N.S.M."/>
            <person name="Weidman J.F."/>
            <person name="Fuhrmann J.L."/>
            <person name="Nguyen D."/>
            <person name="Utterback T.R."/>
            <person name="Kelley J.M."/>
            <person name="Peterson J.D."/>
            <person name="Sadow P.W."/>
            <person name="Hanna M.C."/>
            <person name="Cotton M.D."/>
            <person name="Roberts K.M."/>
            <person name="Hurst M.A."/>
            <person name="Kaine B.P."/>
            <person name="Borodovsky M."/>
            <person name="Klenk H.-P."/>
            <person name="Fraser C.M."/>
            <person name="Smith H.O."/>
            <person name="Woese C.R."/>
            <person name="Venter J.C."/>
        </authorList>
    </citation>
    <scope>NUCLEOTIDE SEQUENCE [LARGE SCALE GENOMIC DNA]</scope>
    <source>
        <strain>ATCC 43067 / DSM 2661 / JAL-1 / JCM 10045 / NBRC 100440</strain>
    </source>
</reference>
<reference key="2">
    <citation type="patent" date="1999-03-11" number="WO9911821">
        <title>Method for screening restriction endonucleases.</title>
        <authorList>
            <person name="Noren C.J."/>
            <person name="Roberts R.J."/>
            <person name="Patti J."/>
            <person name="Byrd D.R."/>
            <person name="Morgan R.D."/>
        </authorList>
    </citation>
    <scope>CHARACTERIZATION</scope>
</reference>
<reference key="3">
    <citation type="journal article" date="2003" name="Nucleic Acids Res.">
        <title>A nomenclature for restriction enzymes, DNA methyltransferases, homing endonucleases and their genes.</title>
        <authorList>
            <person name="Roberts R.J."/>
            <person name="Belfort M."/>
            <person name="Bestor T."/>
            <person name="Bhagwat A.S."/>
            <person name="Bickle T.A."/>
            <person name="Bitinaite J."/>
            <person name="Blumenthal R.M."/>
            <person name="Degtyarev S.K."/>
            <person name="Dryden D.T."/>
            <person name="Dybvig K."/>
            <person name="Firman K."/>
            <person name="Gromova E.S."/>
            <person name="Gumport R.I."/>
            <person name="Halford S.E."/>
            <person name="Hattman S."/>
            <person name="Heitman J."/>
            <person name="Hornby D.P."/>
            <person name="Janulaitis A."/>
            <person name="Jeltsch A."/>
            <person name="Josephsen J."/>
            <person name="Kiss A."/>
            <person name="Klaenhammer T.R."/>
            <person name="Kobayashi I."/>
            <person name="Kong H."/>
            <person name="Krueger D.H."/>
            <person name="Lacks S."/>
            <person name="Marinus M.G."/>
            <person name="Miyahara M."/>
            <person name="Morgan R.D."/>
            <person name="Murray N.E."/>
            <person name="Nagaraja V."/>
            <person name="Piekarowicz A."/>
            <person name="Pingoud A."/>
            <person name="Raleigh E."/>
            <person name="Rao D.N."/>
            <person name="Reich N."/>
            <person name="Repin V.E."/>
            <person name="Selker E.U."/>
            <person name="Shaw P.C."/>
            <person name="Stein D.C."/>
            <person name="Stoddard B.L."/>
            <person name="Szybalski W."/>
            <person name="Trautner T.A."/>
            <person name="Van Etten J.L."/>
            <person name="Vitor J.M."/>
            <person name="Wilson G.G."/>
            <person name="Xu S.Y."/>
        </authorList>
    </citation>
    <scope>NOMENCLATURE</scope>
    <scope>SUBTYPE</scope>
</reference>
<organism>
    <name type="scientific">Methanocaldococcus jannaschii (strain ATCC 43067 / DSM 2661 / JAL-1 / JCM 10045 / NBRC 100440)</name>
    <name type="common">Methanococcus jannaschii</name>
    <dbReference type="NCBI Taxonomy" id="243232"/>
    <lineage>
        <taxon>Archaea</taxon>
        <taxon>Methanobacteriati</taxon>
        <taxon>Methanobacteriota</taxon>
        <taxon>Methanomada group</taxon>
        <taxon>Methanococci</taxon>
        <taxon>Methanococcales</taxon>
        <taxon>Methanocaldococcaceae</taxon>
        <taxon>Methanocaldococcus</taxon>
    </lineage>
</organism>
<dbReference type="EC" id="3.1.21.4"/>
<dbReference type="EMBL" id="L77117">
    <property type="protein sequence ID" value="AAB99521.1"/>
    <property type="molecule type" value="Genomic_DNA"/>
</dbReference>
<dbReference type="PIR" id="C64487">
    <property type="entry name" value="C64487"/>
</dbReference>
<dbReference type="RefSeq" id="WP_010871023.1">
    <property type="nucleotide sequence ID" value="NC_000909.1"/>
</dbReference>
<dbReference type="STRING" id="243232.MJ_1500"/>
<dbReference type="REBASE" id="3898">
    <property type="entry name" value="MjaV"/>
</dbReference>
<dbReference type="PaxDb" id="243232-MJ_1500"/>
<dbReference type="EnsemblBacteria" id="AAB99521">
    <property type="protein sequence ID" value="AAB99521"/>
    <property type="gene ID" value="MJ_1500"/>
</dbReference>
<dbReference type="GeneID" id="1452407"/>
<dbReference type="KEGG" id="mja:MJ_1500"/>
<dbReference type="eggNOG" id="arCOG08288">
    <property type="taxonomic scope" value="Archaea"/>
</dbReference>
<dbReference type="HOGENOM" id="CLU_104917_0_0_2"/>
<dbReference type="InParanoid" id="Q58895"/>
<dbReference type="OrthoDB" id="64242at2157"/>
<dbReference type="BRENDA" id="3.1.21.4">
    <property type="organism ID" value="3260"/>
</dbReference>
<dbReference type="PRO" id="PR:Q58895"/>
<dbReference type="Proteomes" id="UP000000805">
    <property type="component" value="Chromosome"/>
</dbReference>
<dbReference type="GO" id="GO:0003677">
    <property type="term" value="F:DNA binding"/>
    <property type="evidence" value="ECO:0007669"/>
    <property type="project" value="UniProtKB-KW"/>
</dbReference>
<dbReference type="GO" id="GO:0009036">
    <property type="term" value="F:type II site-specific deoxyribonuclease activity"/>
    <property type="evidence" value="ECO:0007669"/>
    <property type="project" value="UniProtKB-EC"/>
</dbReference>
<dbReference type="GO" id="GO:0009307">
    <property type="term" value="P:DNA restriction-modification system"/>
    <property type="evidence" value="ECO:0007669"/>
    <property type="project" value="UniProtKB-KW"/>
</dbReference>
<feature type="chain" id="PRO_0000077336" description="Type II restriction enzyme MjaV">
    <location>
        <begin position="1"/>
        <end position="230"/>
    </location>
</feature>